<name>RNC_BACLD</name>
<keyword id="KW-0963">Cytoplasm</keyword>
<keyword id="KW-0255">Endonuclease</keyword>
<keyword id="KW-0378">Hydrolase</keyword>
<keyword id="KW-0460">Magnesium</keyword>
<keyword id="KW-0479">Metal-binding</keyword>
<keyword id="KW-0507">mRNA processing</keyword>
<keyword id="KW-0540">Nuclease</keyword>
<keyword id="KW-1185">Reference proteome</keyword>
<keyword id="KW-0694">RNA-binding</keyword>
<keyword id="KW-0698">rRNA processing</keyword>
<keyword id="KW-0699">rRNA-binding</keyword>
<keyword id="KW-0819">tRNA processing</keyword>
<organism>
    <name type="scientific">Bacillus licheniformis (strain ATCC 14580 / DSM 13 / JCM 2505 / CCUG 7422 / NBRC 12200 / NCIMB 9375 / NCTC 10341 / NRRL NRS-1264 / Gibson 46)</name>
    <dbReference type="NCBI Taxonomy" id="279010"/>
    <lineage>
        <taxon>Bacteria</taxon>
        <taxon>Bacillati</taxon>
        <taxon>Bacillota</taxon>
        <taxon>Bacilli</taxon>
        <taxon>Bacillales</taxon>
        <taxon>Bacillaceae</taxon>
        <taxon>Bacillus</taxon>
    </lineage>
</organism>
<sequence>MSKHSHFRDKKMFQKKAEQFKKFQERISVQFQNEKLLYQAFTHSSYVNEHRKKPYEDNERLEFLGDAVLELTISQFLYAKYPAMSEGDLTKLRAAIVCEPSLVSLAHELSFGELVLLGKGEEMTGGRKRPALLADVFEAFIGALYLDQGLEAVVTFLKAYVFPKIDDGAFSHVMDFKSQLQEFVQRDGRGILEYKILQEKGPAHNREFEANVSLKGEVLGVGSGRSKKEAEQHAAQEALAKLQKHHMKQ</sequence>
<gene>
    <name evidence="1" type="primary">rnc</name>
    <name type="ordered locus">BLi01814</name>
    <name type="ordered locus">BL02317</name>
</gene>
<reference key="1">
    <citation type="journal article" date="2004" name="J. Mol. Microbiol. Biotechnol.">
        <title>The complete genome sequence of Bacillus licheniformis DSM13, an organism with great industrial potential.</title>
        <authorList>
            <person name="Veith B."/>
            <person name="Herzberg C."/>
            <person name="Steckel S."/>
            <person name="Feesche J."/>
            <person name="Maurer K.H."/>
            <person name="Ehrenreich P."/>
            <person name="Baeumer S."/>
            <person name="Henne A."/>
            <person name="Liesegang H."/>
            <person name="Merkl R."/>
            <person name="Ehrenreich A."/>
            <person name="Gottschalk G."/>
        </authorList>
    </citation>
    <scope>NUCLEOTIDE SEQUENCE [LARGE SCALE GENOMIC DNA]</scope>
    <source>
        <strain>ATCC 14580 / DSM 13 / JCM 2505 / CCUG 7422 / NBRC 12200 / NCIMB 9375 / NCTC 10341 / NRRL NRS-1264 / Gibson 46</strain>
    </source>
</reference>
<reference key="2">
    <citation type="journal article" date="2004" name="Genome Biol.">
        <title>Complete genome sequence of the industrial bacterium Bacillus licheniformis and comparisons with closely related Bacillus species.</title>
        <authorList>
            <person name="Rey M.W."/>
            <person name="Ramaiya P."/>
            <person name="Nelson B.A."/>
            <person name="Brody-Karpin S.D."/>
            <person name="Zaretsky E.J."/>
            <person name="Tang M."/>
            <person name="Lopez de Leon A."/>
            <person name="Xiang H."/>
            <person name="Gusti V."/>
            <person name="Clausen I.G."/>
            <person name="Olsen P.B."/>
            <person name="Rasmussen M.D."/>
            <person name="Andersen J.T."/>
            <person name="Joergensen P.L."/>
            <person name="Larsen T.S."/>
            <person name="Sorokin A."/>
            <person name="Bolotin A."/>
            <person name="Lapidus A."/>
            <person name="Galleron N."/>
            <person name="Ehrlich S.D."/>
            <person name="Berka R.M."/>
        </authorList>
    </citation>
    <scope>NUCLEOTIDE SEQUENCE [LARGE SCALE GENOMIC DNA]</scope>
    <source>
        <strain>ATCC 14580 / DSM 13 / JCM 2505 / CCUG 7422 / NBRC 12200 / NCIMB 9375 / NCTC 10341 / NRRL NRS-1264 / Gibson 46</strain>
    </source>
</reference>
<feature type="chain" id="PRO_0000228494" description="Ribonuclease 3">
    <location>
        <begin position="1"/>
        <end position="249"/>
    </location>
</feature>
<feature type="domain" description="RNase III" evidence="1">
    <location>
        <begin position="20"/>
        <end position="149"/>
    </location>
</feature>
<feature type="domain" description="DRBM" evidence="1">
    <location>
        <begin position="175"/>
        <end position="244"/>
    </location>
</feature>
<feature type="region of interest" description="Disordered" evidence="2">
    <location>
        <begin position="225"/>
        <end position="249"/>
    </location>
</feature>
<feature type="active site" evidence="1">
    <location>
        <position position="66"/>
    </location>
</feature>
<feature type="active site" evidence="1">
    <location>
        <position position="138"/>
    </location>
</feature>
<feature type="binding site" evidence="1">
    <location>
        <position position="62"/>
    </location>
    <ligand>
        <name>Mg(2+)</name>
        <dbReference type="ChEBI" id="CHEBI:18420"/>
    </ligand>
</feature>
<feature type="binding site" evidence="1">
    <location>
        <position position="135"/>
    </location>
    <ligand>
        <name>Mg(2+)</name>
        <dbReference type="ChEBI" id="CHEBI:18420"/>
    </ligand>
</feature>
<feature type="binding site" evidence="1">
    <location>
        <position position="138"/>
    </location>
    <ligand>
        <name>Mg(2+)</name>
        <dbReference type="ChEBI" id="CHEBI:18420"/>
    </ligand>
</feature>
<accession>Q65JQ5</accession>
<accession>Q62V60</accession>
<dbReference type="EC" id="3.1.26.3" evidence="1"/>
<dbReference type="EMBL" id="AE017333">
    <property type="protein sequence ID" value="AAU40709.1"/>
    <property type="molecule type" value="Genomic_DNA"/>
</dbReference>
<dbReference type="EMBL" id="CP000002">
    <property type="protein sequence ID" value="AAU23349.2"/>
    <property type="molecule type" value="Genomic_DNA"/>
</dbReference>
<dbReference type="RefSeq" id="WP_009328527.1">
    <property type="nucleotide sequence ID" value="NC_006322.1"/>
</dbReference>
<dbReference type="SMR" id="Q65JQ5"/>
<dbReference type="STRING" id="279010.BL02317"/>
<dbReference type="GeneID" id="92861593"/>
<dbReference type="KEGG" id="bld:BLi01814"/>
<dbReference type="KEGG" id="bli:BL02317"/>
<dbReference type="eggNOG" id="COG0571">
    <property type="taxonomic scope" value="Bacteria"/>
</dbReference>
<dbReference type="HOGENOM" id="CLU_000907_1_3_9"/>
<dbReference type="Proteomes" id="UP000000606">
    <property type="component" value="Chromosome"/>
</dbReference>
<dbReference type="GO" id="GO:0005737">
    <property type="term" value="C:cytoplasm"/>
    <property type="evidence" value="ECO:0007669"/>
    <property type="project" value="UniProtKB-SubCell"/>
</dbReference>
<dbReference type="GO" id="GO:0003725">
    <property type="term" value="F:double-stranded RNA binding"/>
    <property type="evidence" value="ECO:0007669"/>
    <property type="project" value="TreeGrafter"/>
</dbReference>
<dbReference type="GO" id="GO:0046872">
    <property type="term" value="F:metal ion binding"/>
    <property type="evidence" value="ECO:0007669"/>
    <property type="project" value="UniProtKB-KW"/>
</dbReference>
<dbReference type="GO" id="GO:0004525">
    <property type="term" value="F:ribonuclease III activity"/>
    <property type="evidence" value="ECO:0007669"/>
    <property type="project" value="UniProtKB-UniRule"/>
</dbReference>
<dbReference type="GO" id="GO:0019843">
    <property type="term" value="F:rRNA binding"/>
    <property type="evidence" value="ECO:0007669"/>
    <property type="project" value="UniProtKB-KW"/>
</dbReference>
<dbReference type="GO" id="GO:0006397">
    <property type="term" value="P:mRNA processing"/>
    <property type="evidence" value="ECO:0007669"/>
    <property type="project" value="UniProtKB-UniRule"/>
</dbReference>
<dbReference type="GO" id="GO:0010468">
    <property type="term" value="P:regulation of gene expression"/>
    <property type="evidence" value="ECO:0007669"/>
    <property type="project" value="TreeGrafter"/>
</dbReference>
<dbReference type="GO" id="GO:0006364">
    <property type="term" value="P:rRNA processing"/>
    <property type="evidence" value="ECO:0007669"/>
    <property type="project" value="UniProtKB-UniRule"/>
</dbReference>
<dbReference type="GO" id="GO:0008033">
    <property type="term" value="P:tRNA processing"/>
    <property type="evidence" value="ECO:0007669"/>
    <property type="project" value="UniProtKB-KW"/>
</dbReference>
<dbReference type="CDD" id="cd10845">
    <property type="entry name" value="DSRM_RNAse_III_family"/>
    <property type="match status" value="1"/>
</dbReference>
<dbReference type="CDD" id="cd00593">
    <property type="entry name" value="RIBOc"/>
    <property type="match status" value="1"/>
</dbReference>
<dbReference type="FunFam" id="1.10.1520.10:FF:000001">
    <property type="entry name" value="Ribonuclease 3"/>
    <property type="match status" value="1"/>
</dbReference>
<dbReference type="FunFam" id="3.30.160.20:FF:000003">
    <property type="entry name" value="Ribonuclease 3"/>
    <property type="match status" value="1"/>
</dbReference>
<dbReference type="Gene3D" id="3.30.160.20">
    <property type="match status" value="1"/>
</dbReference>
<dbReference type="Gene3D" id="1.10.1520.10">
    <property type="entry name" value="Ribonuclease III domain"/>
    <property type="match status" value="1"/>
</dbReference>
<dbReference type="HAMAP" id="MF_00104">
    <property type="entry name" value="RNase_III"/>
    <property type="match status" value="1"/>
</dbReference>
<dbReference type="InterPro" id="IPR014720">
    <property type="entry name" value="dsRBD_dom"/>
</dbReference>
<dbReference type="InterPro" id="IPR011907">
    <property type="entry name" value="RNase_III"/>
</dbReference>
<dbReference type="InterPro" id="IPR000999">
    <property type="entry name" value="RNase_III_dom"/>
</dbReference>
<dbReference type="InterPro" id="IPR036389">
    <property type="entry name" value="RNase_III_sf"/>
</dbReference>
<dbReference type="NCBIfam" id="TIGR02191">
    <property type="entry name" value="RNaseIII"/>
    <property type="match status" value="1"/>
</dbReference>
<dbReference type="PANTHER" id="PTHR11207:SF0">
    <property type="entry name" value="RIBONUCLEASE 3"/>
    <property type="match status" value="1"/>
</dbReference>
<dbReference type="PANTHER" id="PTHR11207">
    <property type="entry name" value="RIBONUCLEASE III"/>
    <property type="match status" value="1"/>
</dbReference>
<dbReference type="Pfam" id="PF00035">
    <property type="entry name" value="dsrm"/>
    <property type="match status" value="1"/>
</dbReference>
<dbReference type="Pfam" id="PF14622">
    <property type="entry name" value="Ribonucleas_3_3"/>
    <property type="match status" value="1"/>
</dbReference>
<dbReference type="SMART" id="SM00358">
    <property type="entry name" value="DSRM"/>
    <property type="match status" value="1"/>
</dbReference>
<dbReference type="SMART" id="SM00535">
    <property type="entry name" value="RIBOc"/>
    <property type="match status" value="1"/>
</dbReference>
<dbReference type="SUPFAM" id="SSF54768">
    <property type="entry name" value="dsRNA-binding domain-like"/>
    <property type="match status" value="1"/>
</dbReference>
<dbReference type="SUPFAM" id="SSF69065">
    <property type="entry name" value="RNase III domain-like"/>
    <property type="match status" value="1"/>
</dbReference>
<dbReference type="PROSITE" id="PS50137">
    <property type="entry name" value="DS_RBD"/>
    <property type="match status" value="1"/>
</dbReference>
<dbReference type="PROSITE" id="PS00517">
    <property type="entry name" value="RNASE_3_1"/>
    <property type="match status" value="1"/>
</dbReference>
<dbReference type="PROSITE" id="PS50142">
    <property type="entry name" value="RNASE_3_2"/>
    <property type="match status" value="1"/>
</dbReference>
<comment type="function">
    <text evidence="1">Digests double-stranded RNA. Involved in the processing of primary rRNA transcript to yield the immediate precursors to the large and small rRNAs (23S and 16S). Processes some mRNAs, and tRNAs when they are encoded in the rRNA operon. Processes pre-crRNA and tracrRNA of type II CRISPR loci if present in the organism.</text>
</comment>
<comment type="catalytic activity">
    <reaction evidence="1">
        <text>Endonucleolytic cleavage to 5'-phosphomonoester.</text>
        <dbReference type="EC" id="3.1.26.3"/>
    </reaction>
</comment>
<comment type="cofactor">
    <cofactor evidence="1">
        <name>Mg(2+)</name>
        <dbReference type="ChEBI" id="CHEBI:18420"/>
    </cofactor>
</comment>
<comment type="subunit">
    <text evidence="1">Homodimer.</text>
</comment>
<comment type="subcellular location">
    <subcellularLocation>
        <location evidence="1">Cytoplasm</location>
    </subcellularLocation>
</comment>
<comment type="similarity">
    <text evidence="1">Belongs to the ribonuclease III family.</text>
</comment>
<protein>
    <recommendedName>
        <fullName evidence="1">Ribonuclease 3</fullName>
        <ecNumber evidence="1">3.1.26.3</ecNumber>
    </recommendedName>
    <alternativeName>
        <fullName evidence="1">Ribonuclease III</fullName>
        <shortName evidence="1">RNase III</shortName>
    </alternativeName>
</protein>
<evidence type="ECO:0000255" key="1">
    <source>
        <dbReference type="HAMAP-Rule" id="MF_00104"/>
    </source>
</evidence>
<evidence type="ECO:0000256" key="2">
    <source>
        <dbReference type="SAM" id="MobiDB-lite"/>
    </source>
</evidence>
<proteinExistence type="inferred from homology"/>